<comment type="function">
    <text evidence="1">Necessary for normal cell division and for the maintenance of normal septation.</text>
</comment>
<comment type="cofactor">
    <cofactor evidence="1">
        <name>Mg(2+)</name>
        <dbReference type="ChEBI" id="CHEBI:18420"/>
    </cofactor>
</comment>
<comment type="similarity">
    <text evidence="1">Belongs to the TRAFAC class TrmE-Era-EngA-EngB-Septin-like GTPase superfamily. EngB GTPase family.</text>
</comment>
<accession>B2RL89</accession>
<protein>
    <recommendedName>
        <fullName evidence="1">Probable GTP-binding protein EngB</fullName>
    </recommendedName>
</protein>
<proteinExistence type="inferred from homology"/>
<sequence>MEIKKAAFVISNTDVRKCPDTRLPEYAFIGRSNVGKSSLINMLTGQKGLAMTSQKPGKTQLINHFIIDDSWYLVDLPGYGYARLGASNRESLRRIIETYILCREQLSSLFVLIDCRHEPQKIDLEFLQWLGENGIPFSIVFTKADKLSFSRLKENTEAYKQKLLETWEELPPVFITSSEKKTGKEELLDYIDSINQELATK</sequence>
<gene>
    <name evidence="1" type="primary">engB</name>
    <name type="ordered locus">PGN_1615</name>
</gene>
<name>ENGB_PORG3</name>
<evidence type="ECO:0000255" key="1">
    <source>
        <dbReference type="HAMAP-Rule" id="MF_00321"/>
    </source>
</evidence>
<organism>
    <name type="scientific">Porphyromonas gingivalis (strain ATCC 33277 / DSM 20709 / CIP 103683 / JCM 12257 / NCTC 11834 / 2561)</name>
    <dbReference type="NCBI Taxonomy" id="431947"/>
    <lineage>
        <taxon>Bacteria</taxon>
        <taxon>Pseudomonadati</taxon>
        <taxon>Bacteroidota</taxon>
        <taxon>Bacteroidia</taxon>
        <taxon>Bacteroidales</taxon>
        <taxon>Porphyromonadaceae</taxon>
        <taxon>Porphyromonas</taxon>
    </lineage>
</organism>
<reference key="1">
    <citation type="journal article" date="2008" name="DNA Res.">
        <title>Determination of the genome sequence of Porphyromonas gingivalis strain ATCC 33277 and genomic comparison with strain W83 revealed extensive genome rearrangements in P. gingivalis.</title>
        <authorList>
            <person name="Naito M."/>
            <person name="Hirakawa H."/>
            <person name="Yamashita A."/>
            <person name="Ohara N."/>
            <person name="Shoji M."/>
            <person name="Yukitake H."/>
            <person name="Nakayama K."/>
            <person name="Toh H."/>
            <person name="Yoshimura F."/>
            <person name="Kuhara S."/>
            <person name="Hattori M."/>
            <person name="Hayashi T."/>
            <person name="Nakayama K."/>
        </authorList>
    </citation>
    <scope>NUCLEOTIDE SEQUENCE [LARGE SCALE GENOMIC DNA]</scope>
    <source>
        <strain>ATCC 33277 / DSM 20709 / CIP 103683 / JCM 12257 / NCTC 11834 / 2561</strain>
    </source>
</reference>
<feature type="chain" id="PRO_1000115993" description="Probable GTP-binding protein EngB">
    <location>
        <begin position="1"/>
        <end position="201"/>
    </location>
</feature>
<feature type="domain" description="EngB-type G" evidence="1">
    <location>
        <begin position="22"/>
        <end position="197"/>
    </location>
</feature>
<feature type="binding site" evidence="1">
    <location>
        <begin position="30"/>
        <end position="37"/>
    </location>
    <ligand>
        <name>GTP</name>
        <dbReference type="ChEBI" id="CHEBI:37565"/>
    </ligand>
</feature>
<feature type="binding site" evidence="1">
    <location>
        <position position="37"/>
    </location>
    <ligand>
        <name>Mg(2+)</name>
        <dbReference type="ChEBI" id="CHEBI:18420"/>
    </ligand>
</feature>
<feature type="binding site" evidence="1">
    <location>
        <begin position="57"/>
        <end position="61"/>
    </location>
    <ligand>
        <name>GTP</name>
        <dbReference type="ChEBI" id="CHEBI:37565"/>
    </ligand>
</feature>
<feature type="binding site" evidence="1">
    <location>
        <position position="59"/>
    </location>
    <ligand>
        <name>Mg(2+)</name>
        <dbReference type="ChEBI" id="CHEBI:18420"/>
    </ligand>
</feature>
<feature type="binding site" evidence="1">
    <location>
        <begin position="75"/>
        <end position="78"/>
    </location>
    <ligand>
        <name>GTP</name>
        <dbReference type="ChEBI" id="CHEBI:37565"/>
    </ligand>
</feature>
<feature type="binding site" evidence="1">
    <location>
        <begin position="142"/>
        <end position="145"/>
    </location>
    <ligand>
        <name>GTP</name>
        <dbReference type="ChEBI" id="CHEBI:37565"/>
    </ligand>
</feature>
<feature type="binding site" evidence="1">
    <location>
        <begin position="173"/>
        <end position="178"/>
    </location>
    <ligand>
        <name>GTP</name>
        <dbReference type="ChEBI" id="CHEBI:37565"/>
    </ligand>
</feature>
<dbReference type="EMBL" id="AP009380">
    <property type="protein sequence ID" value="BAG34134.1"/>
    <property type="molecule type" value="Genomic_DNA"/>
</dbReference>
<dbReference type="SMR" id="B2RL89"/>
<dbReference type="GeneID" id="29256786"/>
<dbReference type="KEGG" id="pgn:PGN_1615"/>
<dbReference type="eggNOG" id="COG0218">
    <property type="taxonomic scope" value="Bacteria"/>
</dbReference>
<dbReference type="HOGENOM" id="CLU_033732_3_1_10"/>
<dbReference type="OrthoDB" id="9804921at2"/>
<dbReference type="BioCyc" id="PGIN431947:G1G2V-1815-MONOMER"/>
<dbReference type="Proteomes" id="UP000008842">
    <property type="component" value="Chromosome"/>
</dbReference>
<dbReference type="GO" id="GO:0005525">
    <property type="term" value="F:GTP binding"/>
    <property type="evidence" value="ECO:0007669"/>
    <property type="project" value="UniProtKB-UniRule"/>
</dbReference>
<dbReference type="GO" id="GO:0046872">
    <property type="term" value="F:metal ion binding"/>
    <property type="evidence" value="ECO:0007669"/>
    <property type="project" value="UniProtKB-KW"/>
</dbReference>
<dbReference type="GO" id="GO:0000917">
    <property type="term" value="P:division septum assembly"/>
    <property type="evidence" value="ECO:0007669"/>
    <property type="project" value="UniProtKB-KW"/>
</dbReference>
<dbReference type="CDD" id="cd01876">
    <property type="entry name" value="YihA_EngB"/>
    <property type="match status" value="1"/>
</dbReference>
<dbReference type="FunFam" id="3.40.50.300:FF:000098">
    <property type="entry name" value="Probable GTP-binding protein EngB"/>
    <property type="match status" value="1"/>
</dbReference>
<dbReference type="Gene3D" id="3.40.50.300">
    <property type="entry name" value="P-loop containing nucleotide triphosphate hydrolases"/>
    <property type="match status" value="1"/>
</dbReference>
<dbReference type="HAMAP" id="MF_00321">
    <property type="entry name" value="GTPase_EngB"/>
    <property type="match status" value="1"/>
</dbReference>
<dbReference type="InterPro" id="IPR030393">
    <property type="entry name" value="G_ENGB_dom"/>
</dbReference>
<dbReference type="InterPro" id="IPR006073">
    <property type="entry name" value="GTP-bd"/>
</dbReference>
<dbReference type="InterPro" id="IPR019987">
    <property type="entry name" value="GTP-bd_ribosome_bio_YsxC"/>
</dbReference>
<dbReference type="InterPro" id="IPR027417">
    <property type="entry name" value="P-loop_NTPase"/>
</dbReference>
<dbReference type="NCBIfam" id="TIGR03598">
    <property type="entry name" value="GTPase_YsxC"/>
    <property type="match status" value="1"/>
</dbReference>
<dbReference type="PANTHER" id="PTHR11649:SF13">
    <property type="entry name" value="ENGB-TYPE G DOMAIN-CONTAINING PROTEIN"/>
    <property type="match status" value="1"/>
</dbReference>
<dbReference type="PANTHER" id="PTHR11649">
    <property type="entry name" value="MSS1/TRME-RELATED GTP-BINDING PROTEIN"/>
    <property type="match status" value="1"/>
</dbReference>
<dbReference type="Pfam" id="PF01926">
    <property type="entry name" value="MMR_HSR1"/>
    <property type="match status" value="1"/>
</dbReference>
<dbReference type="SUPFAM" id="SSF52540">
    <property type="entry name" value="P-loop containing nucleoside triphosphate hydrolases"/>
    <property type="match status" value="1"/>
</dbReference>
<dbReference type="PROSITE" id="PS51706">
    <property type="entry name" value="G_ENGB"/>
    <property type="match status" value="1"/>
</dbReference>
<keyword id="KW-0131">Cell cycle</keyword>
<keyword id="KW-0132">Cell division</keyword>
<keyword id="KW-0342">GTP-binding</keyword>
<keyword id="KW-0460">Magnesium</keyword>
<keyword id="KW-0479">Metal-binding</keyword>
<keyword id="KW-0547">Nucleotide-binding</keyword>
<keyword id="KW-0717">Septation</keyword>